<proteinExistence type="inferred from homology"/>
<keyword id="KW-0067">ATP-binding</keyword>
<keyword id="KW-0227">DNA damage</keyword>
<keyword id="KW-0234">DNA repair</keyword>
<keyword id="KW-0238">DNA-binding</keyword>
<keyword id="KW-0547">Nucleotide-binding</keyword>
<keyword id="KW-1185">Reference proteome</keyword>
<feature type="chain" id="PRO_0000224372" description="DNA mismatch repair protein MutS">
    <location>
        <begin position="1"/>
        <end position="854"/>
    </location>
</feature>
<feature type="binding site" evidence="1">
    <location>
        <begin position="616"/>
        <end position="623"/>
    </location>
    <ligand>
        <name>ATP</name>
        <dbReference type="ChEBI" id="CHEBI:30616"/>
    </ligand>
</feature>
<evidence type="ECO:0000255" key="1">
    <source>
        <dbReference type="HAMAP-Rule" id="MF_00096"/>
    </source>
</evidence>
<name>MUTS_PECAS</name>
<sequence>MKESEGIDLSTHTPMMQQYFRLKAEHPEILLFYRMGDFYELFFDDAKRASQLLDISLTKRGASAGEPIPMAGVPHHAVENYLARLVQMGESVAICEQIGDPATSKGPVERKVVRIVTPGTISDEALLQEKQDNLLAAIWQDGRGFGYATLDISSGRFRVSEPADRETMAAELQRTNPAELLYPESFESMELIDNRHGLRRRPMWEFEPDTARQQLNLQFGTRDLTGFGVEQAKLALRAAGCLLQYAKDTQRTSLPHIRGITMERQQDGIIMDAATRRNLELTQNLSGGVENTLAAVLDCTVTAMGSRMLKRWIHMPSRDIDALKQRQQAISALQEITPDLQPYLRQVGDLERILARLALRTARPRDLARMRHAFQQFPDIREQLAPLDTDSVRRLVSLIGQFDELRDLLERAVVEAPPVLVRDGGVIAPGYHTELDEWRALADGASDYLDRLEIREREKLGLDTLKVGFNGVHGYYIQVSRGQSHLVPIHYVRRQTLKNAERYIIPELKEYEDKVLTSKGKALALEKALYDELFDLLLPHLAELQQSAAALAELDVLTNLAERADTLNYVCPTLSDKPGIKIAGGRHPVVEQVLREPFISNPLSLSPQRRMLIITGPNMGGKSTYMRQAALIVLMAHIGCFVPADQAVIGPVDRIFTRVGAADDLASGRSTFMVEMTETANILHNATENSLVLMDEIGRGTSTYDGLSLAWACAESLANRIKAMTLFATHYFELTTLPEKMEGVVNVHLDAREHGDTIAFMHSVQDGAASKSYGLAVAALAGVPKEVIKRARQKLKELETLSNNASSSHIDGAQLALLNTDEPSPAIEALEAIDPDALTPRQALDWLYQLKKML</sequence>
<dbReference type="EMBL" id="BX950851">
    <property type="protein sequence ID" value="CAG73964.1"/>
    <property type="molecule type" value="Genomic_DNA"/>
</dbReference>
<dbReference type="RefSeq" id="WP_011092651.1">
    <property type="nucleotide sequence ID" value="NC_004547.2"/>
</dbReference>
<dbReference type="SMR" id="Q6D8C1"/>
<dbReference type="STRING" id="218491.ECA1053"/>
<dbReference type="KEGG" id="eca:ECA1053"/>
<dbReference type="PATRIC" id="fig|218491.5.peg.1062"/>
<dbReference type="eggNOG" id="COG0249">
    <property type="taxonomic scope" value="Bacteria"/>
</dbReference>
<dbReference type="HOGENOM" id="CLU_002472_4_0_6"/>
<dbReference type="Proteomes" id="UP000007966">
    <property type="component" value="Chromosome"/>
</dbReference>
<dbReference type="GO" id="GO:0005829">
    <property type="term" value="C:cytosol"/>
    <property type="evidence" value="ECO:0007669"/>
    <property type="project" value="TreeGrafter"/>
</dbReference>
<dbReference type="GO" id="GO:0005524">
    <property type="term" value="F:ATP binding"/>
    <property type="evidence" value="ECO:0007669"/>
    <property type="project" value="UniProtKB-UniRule"/>
</dbReference>
<dbReference type="GO" id="GO:0140664">
    <property type="term" value="F:ATP-dependent DNA damage sensor activity"/>
    <property type="evidence" value="ECO:0007669"/>
    <property type="project" value="InterPro"/>
</dbReference>
<dbReference type="GO" id="GO:0003684">
    <property type="term" value="F:damaged DNA binding"/>
    <property type="evidence" value="ECO:0007669"/>
    <property type="project" value="UniProtKB-UniRule"/>
</dbReference>
<dbReference type="GO" id="GO:0030983">
    <property type="term" value="F:mismatched DNA binding"/>
    <property type="evidence" value="ECO:0007669"/>
    <property type="project" value="InterPro"/>
</dbReference>
<dbReference type="GO" id="GO:0006298">
    <property type="term" value="P:mismatch repair"/>
    <property type="evidence" value="ECO:0007669"/>
    <property type="project" value="UniProtKB-UniRule"/>
</dbReference>
<dbReference type="CDD" id="cd03284">
    <property type="entry name" value="ABC_MutS1"/>
    <property type="match status" value="1"/>
</dbReference>
<dbReference type="FunFam" id="1.10.1420.10:FF:000002">
    <property type="entry name" value="DNA mismatch repair protein MutS"/>
    <property type="match status" value="1"/>
</dbReference>
<dbReference type="FunFam" id="3.30.420.110:FF:000001">
    <property type="entry name" value="DNA mismatch repair protein MutS"/>
    <property type="match status" value="1"/>
</dbReference>
<dbReference type="FunFam" id="3.40.1170.10:FF:000001">
    <property type="entry name" value="DNA mismatch repair protein MutS"/>
    <property type="match status" value="1"/>
</dbReference>
<dbReference type="FunFam" id="3.40.50.300:FF:000283">
    <property type="entry name" value="DNA mismatch repair protein MutS"/>
    <property type="match status" value="1"/>
</dbReference>
<dbReference type="Gene3D" id="1.10.1420.10">
    <property type="match status" value="2"/>
</dbReference>
<dbReference type="Gene3D" id="6.10.140.430">
    <property type="match status" value="1"/>
</dbReference>
<dbReference type="Gene3D" id="3.40.1170.10">
    <property type="entry name" value="DNA repair protein MutS, domain I"/>
    <property type="match status" value="1"/>
</dbReference>
<dbReference type="Gene3D" id="3.30.420.110">
    <property type="entry name" value="MutS, connector domain"/>
    <property type="match status" value="1"/>
</dbReference>
<dbReference type="Gene3D" id="3.40.50.300">
    <property type="entry name" value="P-loop containing nucleotide triphosphate hydrolases"/>
    <property type="match status" value="1"/>
</dbReference>
<dbReference type="HAMAP" id="MF_00096">
    <property type="entry name" value="MutS"/>
    <property type="match status" value="1"/>
</dbReference>
<dbReference type="InterPro" id="IPR005748">
    <property type="entry name" value="DNA_mismatch_repair_MutS"/>
</dbReference>
<dbReference type="InterPro" id="IPR007695">
    <property type="entry name" value="DNA_mismatch_repair_MutS-lik_N"/>
</dbReference>
<dbReference type="InterPro" id="IPR017261">
    <property type="entry name" value="DNA_mismatch_repair_MutS/MSH"/>
</dbReference>
<dbReference type="InterPro" id="IPR000432">
    <property type="entry name" value="DNA_mismatch_repair_MutS_C"/>
</dbReference>
<dbReference type="InterPro" id="IPR007861">
    <property type="entry name" value="DNA_mismatch_repair_MutS_clamp"/>
</dbReference>
<dbReference type="InterPro" id="IPR007696">
    <property type="entry name" value="DNA_mismatch_repair_MutS_core"/>
</dbReference>
<dbReference type="InterPro" id="IPR016151">
    <property type="entry name" value="DNA_mismatch_repair_MutS_N"/>
</dbReference>
<dbReference type="InterPro" id="IPR036187">
    <property type="entry name" value="DNA_mismatch_repair_MutS_sf"/>
</dbReference>
<dbReference type="InterPro" id="IPR007860">
    <property type="entry name" value="DNA_mmatch_repair_MutS_con_dom"/>
</dbReference>
<dbReference type="InterPro" id="IPR045076">
    <property type="entry name" value="MutS"/>
</dbReference>
<dbReference type="InterPro" id="IPR036678">
    <property type="entry name" value="MutS_con_dom_sf"/>
</dbReference>
<dbReference type="InterPro" id="IPR027417">
    <property type="entry name" value="P-loop_NTPase"/>
</dbReference>
<dbReference type="NCBIfam" id="TIGR01070">
    <property type="entry name" value="mutS1"/>
    <property type="match status" value="1"/>
</dbReference>
<dbReference type="NCBIfam" id="NF003810">
    <property type="entry name" value="PRK05399.1"/>
    <property type="match status" value="1"/>
</dbReference>
<dbReference type="PANTHER" id="PTHR11361:SF34">
    <property type="entry name" value="DNA MISMATCH REPAIR PROTEIN MSH1, MITOCHONDRIAL"/>
    <property type="match status" value="1"/>
</dbReference>
<dbReference type="PANTHER" id="PTHR11361">
    <property type="entry name" value="DNA MISMATCH REPAIR PROTEIN MUTS FAMILY MEMBER"/>
    <property type="match status" value="1"/>
</dbReference>
<dbReference type="Pfam" id="PF01624">
    <property type="entry name" value="MutS_I"/>
    <property type="match status" value="1"/>
</dbReference>
<dbReference type="Pfam" id="PF05188">
    <property type="entry name" value="MutS_II"/>
    <property type="match status" value="1"/>
</dbReference>
<dbReference type="Pfam" id="PF05192">
    <property type="entry name" value="MutS_III"/>
    <property type="match status" value="1"/>
</dbReference>
<dbReference type="Pfam" id="PF05190">
    <property type="entry name" value="MutS_IV"/>
    <property type="match status" value="1"/>
</dbReference>
<dbReference type="Pfam" id="PF00488">
    <property type="entry name" value="MutS_V"/>
    <property type="match status" value="1"/>
</dbReference>
<dbReference type="PIRSF" id="PIRSF037677">
    <property type="entry name" value="DNA_mis_repair_Msh6"/>
    <property type="match status" value="1"/>
</dbReference>
<dbReference type="SMART" id="SM00534">
    <property type="entry name" value="MUTSac"/>
    <property type="match status" value="1"/>
</dbReference>
<dbReference type="SMART" id="SM00533">
    <property type="entry name" value="MUTSd"/>
    <property type="match status" value="1"/>
</dbReference>
<dbReference type="SUPFAM" id="SSF55271">
    <property type="entry name" value="DNA repair protein MutS, domain I"/>
    <property type="match status" value="1"/>
</dbReference>
<dbReference type="SUPFAM" id="SSF53150">
    <property type="entry name" value="DNA repair protein MutS, domain II"/>
    <property type="match status" value="1"/>
</dbReference>
<dbReference type="SUPFAM" id="SSF48334">
    <property type="entry name" value="DNA repair protein MutS, domain III"/>
    <property type="match status" value="1"/>
</dbReference>
<dbReference type="SUPFAM" id="SSF52540">
    <property type="entry name" value="P-loop containing nucleoside triphosphate hydrolases"/>
    <property type="match status" value="1"/>
</dbReference>
<dbReference type="PROSITE" id="PS00486">
    <property type="entry name" value="DNA_MISMATCH_REPAIR_2"/>
    <property type="match status" value="1"/>
</dbReference>
<accession>Q6D8C1</accession>
<protein>
    <recommendedName>
        <fullName evidence="1">DNA mismatch repair protein MutS</fullName>
    </recommendedName>
</protein>
<organism>
    <name type="scientific">Pectobacterium atrosepticum (strain SCRI 1043 / ATCC BAA-672)</name>
    <name type="common">Erwinia carotovora subsp. atroseptica</name>
    <dbReference type="NCBI Taxonomy" id="218491"/>
    <lineage>
        <taxon>Bacteria</taxon>
        <taxon>Pseudomonadati</taxon>
        <taxon>Pseudomonadota</taxon>
        <taxon>Gammaproteobacteria</taxon>
        <taxon>Enterobacterales</taxon>
        <taxon>Pectobacteriaceae</taxon>
        <taxon>Pectobacterium</taxon>
    </lineage>
</organism>
<reference key="1">
    <citation type="journal article" date="2004" name="Proc. Natl. Acad. Sci. U.S.A.">
        <title>Genome sequence of the enterobacterial phytopathogen Erwinia carotovora subsp. atroseptica and characterization of virulence factors.</title>
        <authorList>
            <person name="Bell K.S."/>
            <person name="Sebaihia M."/>
            <person name="Pritchard L."/>
            <person name="Holden M.T.G."/>
            <person name="Hyman L.J."/>
            <person name="Holeva M.C."/>
            <person name="Thomson N.R."/>
            <person name="Bentley S.D."/>
            <person name="Churcher L.J.C."/>
            <person name="Mungall K."/>
            <person name="Atkin R."/>
            <person name="Bason N."/>
            <person name="Brooks K."/>
            <person name="Chillingworth T."/>
            <person name="Clark K."/>
            <person name="Doggett J."/>
            <person name="Fraser A."/>
            <person name="Hance Z."/>
            <person name="Hauser H."/>
            <person name="Jagels K."/>
            <person name="Moule S."/>
            <person name="Norbertczak H."/>
            <person name="Ormond D."/>
            <person name="Price C."/>
            <person name="Quail M.A."/>
            <person name="Sanders M."/>
            <person name="Walker D."/>
            <person name="Whitehead S."/>
            <person name="Salmond G.P.C."/>
            <person name="Birch P.R.J."/>
            <person name="Parkhill J."/>
            <person name="Toth I.K."/>
        </authorList>
    </citation>
    <scope>NUCLEOTIDE SEQUENCE [LARGE SCALE GENOMIC DNA]</scope>
    <source>
        <strain>SCRI 1043 / ATCC BAA-672</strain>
    </source>
</reference>
<comment type="function">
    <text evidence="1">This protein is involved in the repair of mismatches in DNA. It is possible that it carries out the mismatch recognition step. This protein has a weak ATPase activity.</text>
</comment>
<comment type="similarity">
    <text evidence="1">Belongs to the DNA mismatch repair MutS family.</text>
</comment>
<gene>
    <name evidence="1" type="primary">mutS</name>
    <name type="ordered locus">ECA1053</name>
</gene>